<comment type="function">
    <text evidence="1">Catalyzes the formation of 4-diphosphocytidyl-2-C-methyl-D-erythritol from CTP and 2-C-methyl-D-erythritol 4-phosphate (MEP).</text>
</comment>
<comment type="catalytic activity">
    <reaction evidence="1">
        <text>2-C-methyl-D-erythritol 4-phosphate + CTP + H(+) = 4-CDP-2-C-methyl-D-erythritol + diphosphate</text>
        <dbReference type="Rhea" id="RHEA:13429"/>
        <dbReference type="ChEBI" id="CHEBI:15378"/>
        <dbReference type="ChEBI" id="CHEBI:33019"/>
        <dbReference type="ChEBI" id="CHEBI:37563"/>
        <dbReference type="ChEBI" id="CHEBI:57823"/>
        <dbReference type="ChEBI" id="CHEBI:58262"/>
        <dbReference type="EC" id="2.7.7.60"/>
    </reaction>
</comment>
<comment type="pathway">
    <text evidence="1">Isoprenoid biosynthesis; isopentenyl diphosphate biosynthesis via DXP pathway; isopentenyl diphosphate from 1-deoxy-D-xylulose 5-phosphate: step 2/6.</text>
</comment>
<comment type="similarity">
    <text evidence="1">Belongs to the IspD/TarI cytidylyltransferase family. IspD subfamily.</text>
</comment>
<proteinExistence type="inferred from homology"/>
<keyword id="KW-0414">Isoprene biosynthesis</keyword>
<keyword id="KW-0548">Nucleotidyltransferase</keyword>
<keyword id="KW-1185">Reference proteome</keyword>
<keyword id="KW-0808">Transferase</keyword>
<organism>
    <name type="scientific">Nostoc sp. (strain PCC 7120 / SAG 25.82 / UTEX 2576)</name>
    <dbReference type="NCBI Taxonomy" id="103690"/>
    <lineage>
        <taxon>Bacteria</taxon>
        <taxon>Bacillati</taxon>
        <taxon>Cyanobacteriota</taxon>
        <taxon>Cyanophyceae</taxon>
        <taxon>Nostocales</taxon>
        <taxon>Nostocaceae</taxon>
        <taxon>Nostoc</taxon>
    </lineage>
</organism>
<dbReference type="EC" id="2.7.7.60" evidence="1"/>
<dbReference type="EMBL" id="BA000019">
    <property type="protein sequence ID" value="BAB76866.1"/>
    <property type="molecule type" value="Genomic_DNA"/>
</dbReference>
<dbReference type="PIR" id="AG2451">
    <property type="entry name" value="AG2451"/>
</dbReference>
<dbReference type="SMR" id="Q8YLX9"/>
<dbReference type="STRING" id="103690.gene:10497226"/>
<dbReference type="KEGG" id="ana:all5167"/>
<dbReference type="eggNOG" id="COG1211">
    <property type="taxonomic scope" value="Bacteria"/>
</dbReference>
<dbReference type="OrthoDB" id="9806837at2"/>
<dbReference type="UniPathway" id="UPA00056">
    <property type="reaction ID" value="UER00093"/>
</dbReference>
<dbReference type="Proteomes" id="UP000002483">
    <property type="component" value="Chromosome"/>
</dbReference>
<dbReference type="GO" id="GO:0050518">
    <property type="term" value="F:2-C-methyl-D-erythritol 4-phosphate cytidylyltransferase activity"/>
    <property type="evidence" value="ECO:0007669"/>
    <property type="project" value="UniProtKB-UniRule"/>
</dbReference>
<dbReference type="GO" id="GO:0019288">
    <property type="term" value="P:isopentenyl diphosphate biosynthetic process, methylerythritol 4-phosphate pathway"/>
    <property type="evidence" value="ECO:0007669"/>
    <property type="project" value="UniProtKB-UniRule"/>
</dbReference>
<dbReference type="CDD" id="cd02516">
    <property type="entry name" value="CDP-ME_synthetase"/>
    <property type="match status" value="1"/>
</dbReference>
<dbReference type="FunFam" id="3.90.550.10:FF:000003">
    <property type="entry name" value="2-C-methyl-D-erythritol 4-phosphate cytidylyltransferase"/>
    <property type="match status" value="1"/>
</dbReference>
<dbReference type="Gene3D" id="3.90.550.10">
    <property type="entry name" value="Spore Coat Polysaccharide Biosynthesis Protein SpsA, Chain A"/>
    <property type="match status" value="1"/>
</dbReference>
<dbReference type="HAMAP" id="MF_00108">
    <property type="entry name" value="IspD"/>
    <property type="match status" value="1"/>
</dbReference>
<dbReference type="InterPro" id="IPR001228">
    <property type="entry name" value="IspD"/>
</dbReference>
<dbReference type="InterPro" id="IPR034683">
    <property type="entry name" value="IspD/TarI"/>
</dbReference>
<dbReference type="InterPro" id="IPR050088">
    <property type="entry name" value="IspD/TarI_cytidylyltransf_bact"/>
</dbReference>
<dbReference type="InterPro" id="IPR018294">
    <property type="entry name" value="ISPD_synthase_CS"/>
</dbReference>
<dbReference type="InterPro" id="IPR029044">
    <property type="entry name" value="Nucleotide-diphossugar_trans"/>
</dbReference>
<dbReference type="NCBIfam" id="TIGR00453">
    <property type="entry name" value="ispD"/>
    <property type="match status" value="1"/>
</dbReference>
<dbReference type="PANTHER" id="PTHR32125">
    <property type="entry name" value="2-C-METHYL-D-ERYTHRITOL 4-PHOSPHATE CYTIDYLYLTRANSFERASE, CHLOROPLASTIC"/>
    <property type="match status" value="1"/>
</dbReference>
<dbReference type="PANTHER" id="PTHR32125:SF4">
    <property type="entry name" value="2-C-METHYL-D-ERYTHRITOL 4-PHOSPHATE CYTIDYLYLTRANSFERASE, CHLOROPLASTIC"/>
    <property type="match status" value="1"/>
</dbReference>
<dbReference type="Pfam" id="PF01128">
    <property type="entry name" value="IspD"/>
    <property type="match status" value="1"/>
</dbReference>
<dbReference type="SUPFAM" id="SSF53448">
    <property type="entry name" value="Nucleotide-diphospho-sugar transferases"/>
    <property type="match status" value="1"/>
</dbReference>
<dbReference type="PROSITE" id="PS01295">
    <property type="entry name" value="ISPD"/>
    <property type="match status" value="1"/>
</dbReference>
<feature type="chain" id="PRO_0000075544" description="2-C-methyl-D-erythritol 4-phosphate cytidylyltransferase">
    <location>
        <begin position="1"/>
        <end position="228"/>
    </location>
</feature>
<feature type="site" description="Transition state stabilizer" evidence="1">
    <location>
        <position position="13"/>
    </location>
</feature>
<feature type="site" description="Transition state stabilizer" evidence="1">
    <location>
        <position position="20"/>
    </location>
</feature>
<feature type="site" description="Positions MEP for the nucleophilic attack" evidence="1">
    <location>
        <position position="152"/>
    </location>
</feature>
<feature type="site" description="Positions MEP for the nucleophilic attack" evidence="1">
    <location>
        <position position="208"/>
    </location>
</feature>
<gene>
    <name evidence="1" type="primary">ispD</name>
    <name type="ordered locus">all5167</name>
</gene>
<name>ISPD_NOSS1</name>
<accession>Q8YLX9</accession>
<evidence type="ECO:0000255" key="1">
    <source>
        <dbReference type="HAMAP-Rule" id="MF_00108"/>
    </source>
</evidence>
<protein>
    <recommendedName>
        <fullName evidence="1">2-C-methyl-D-erythritol 4-phosphate cytidylyltransferase</fullName>
        <ecNumber evidence="1">2.7.7.60</ecNumber>
    </recommendedName>
    <alternativeName>
        <fullName evidence="1">4-diphosphocytidyl-2C-methyl-D-erythritol synthase</fullName>
    </alternativeName>
    <alternativeName>
        <fullName evidence="1">MEP cytidylyltransferase</fullName>
        <shortName evidence="1">MCT</shortName>
    </alternativeName>
</protein>
<sequence length="228" mass="24882">MYLLIPAAGVGKRMGCDRNKLLLEVRSQPIIAWTLLAAQAASEISWIGIISQPTDWPDFKSILANLQLTKPVEFILGGSTRQESVYNGLQALPTAAEQVLIHDGARCLATPNLLNSCAQAIRHCSGLIAAVPVKDTIKVVDEDGIIQNTPDRRNLWAAQTPQGFNVELLKQCHAEGVRQGWEVTDDAALFEKCGIEVQIVEGEETNLKVTTPQDLAIAEFILNSRDNS</sequence>
<reference key="1">
    <citation type="journal article" date="2001" name="DNA Res.">
        <title>Complete genomic sequence of the filamentous nitrogen-fixing cyanobacterium Anabaena sp. strain PCC 7120.</title>
        <authorList>
            <person name="Kaneko T."/>
            <person name="Nakamura Y."/>
            <person name="Wolk C.P."/>
            <person name="Kuritz T."/>
            <person name="Sasamoto S."/>
            <person name="Watanabe A."/>
            <person name="Iriguchi M."/>
            <person name="Ishikawa A."/>
            <person name="Kawashima K."/>
            <person name="Kimura T."/>
            <person name="Kishida Y."/>
            <person name="Kohara M."/>
            <person name="Matsumoto M."/>
            <person name="Matsuno A."/>
            <person name="Muraki A."/>
            <person name="Nakazaki N."/>
            <person name="Shimpo S."/>
            <person name="Sugimoto M."/>
            <person name="Takazawa M."/>
            <person name="Yamada M."/>
            <person name="Yasuda M."/>
            <person name="Tabata S."/>
        </authorList>
    </citation>
    <scope>NUCLEOTIDE SEQUENCE [LARGE SCALE GENOMIC DNA]</scope>
    <source>
        <strain>PCC 7120 / SAG 25.82 / UTEX 2576</strain>
    </source>
</reference>